<proteinExistence type="inferred from homology"/>
<feature type="chain" id="PRO_0000438835" description="Glucose-1-phosphate adenylyltransferase">
    <location>
        <begin position="1"/>
        <end position="404"/>
    </location>
</feature>
<feature type="binding site" evidence="1">
    <location>
        <position position="99"/>
    </location>
    <ligand>
        <name>alpha-D-glucose 1-phosphate</name>
        <dbReference type="ChEBI" id="CHEBI:58601"/>
    </ligand>
</feature>
<feature type="binding site" evidence="1">
    <location>
        <position position="164"/>
    </location>
    <ligand>
        <name>alpha-D-glucose 1-phosphate</name>
        <dbReference type="ChEBI" id="CHEBI:58601"/>
    </ligand>
</feature>
<feature type="binding site" evidence="1">
    <location>
        <begin position="179"/>
        <end position="180"/>
    </location>
    <ligand>
        <name>alpha-D-glucose 1-phosphate</name>
        <dbReference type="ChEBI" id="CHEBI:58601"/>
    </ligand>
</feature>
<feature type="binding site" evidence="1">
    <location>
        <position position="197"/>
    </location>
    <ligand>
        <name>alpha-D-glucose 1-phosphate</name>
        <dbReference type="ChEBI" id="CHEBI:58601"/>
    </ligand>
</feature>
<reference key="1">
    <citation type="submission" date="2006-10" db="EMBL/GenBank/DDBJ databases">
        <authorList>
            <person name="Fleischmann R.D."/>
            <person name="Dodson R.J."/>
            <person name="Haft D.H."/>
            <person name="Merkel J.S."/>
            <person name="Nelson W.C."/>
            <person name="Fraser C.M."/>
        </authorList>
    </citation>
    <scope>NUCLEOTIDE SEQUENCE [LARGE SCALE GENOMIC DNA]</scope>
    <source>
        <strain>ATCC 700084 / mc(2)155</strain>
    </source>
</reference>
<reference key="2">
    <citation type="journal article" date="2007" name="Genome Biol.">
        <title>Interrupted coding sequences in Mycobacterium smegmatis: authentic mutations or sequencing errors?</title>
        <authorList>
            <person name="Deshayes C."/>
            <person name="Perrodou E."/>
            <person name="Gallien S."/>
            <person name="Euphrasie D."/>
            <person name="Schaeffer C."/>
            <person name="Van-Dorsselaer A."/>
            <person name="Poch O."/>
            <person name="Lecompte O."/>
            <person name="Reyrat J.-M."/>
        </authorList>
    </citation>
    <scope>NUCLEOTIDE SEQUENCE [LARGE SCALE GENOMIC DNA]</scope>
    <source>
        <strain>ATCC 700084 / mc(2)155</strain>
    </source>
</reference>
<reference key="3">
    <citation type="journal article" date="2009" name="Genome Res.">
        <title>Ortho-proteogenomics: multiple proteomes investigation through orthology and a new MS-based protocol.</title>
        <authorList>
            <person name="Gallien S."/>
            <person name="Perrodou E."/>
            <person name="Carapito C."/>
            <person name="Deshayes C."/>
            <person name="Reyrat J.-M."/>
            <person name="Van Dorsselaer A."/>
            <person name="Poch O."/>
            <person name="Schaeffer C."/>
            <person name="Lecompte O."/>
        </authorList>
    </citation>
    <scope>NUCLEOTIDE SEQUENCE [LARGE SCALE GENOMIC DNA]</scope>
    <source>
        <strain>ATCC 700084 / mc(2)155</strain>
    </source>
</reference>
<reference key="4">
    <citation type="journal article" date="2016" name="PLoS Pathog.">
        <title>Metabolic network for the biosynthesis of intra- and extracellular alpha-glucans required for virulence of Mycobacterium tuberculosis.</title>
        <authorList>
            <person name="Koliwer-Brandl H."/>
            <person name="Syson K."/>
            <person name="van de Weerd R."/>
            <person name="Chandra G."/>
            <person name="Appelmelk B."/>
            <person name="Alber M."/>
            <person name="Ioerger T.R."/>
            <person name="Jacobs W.R. Jr."/>
            <person name="Geurtsen J."/>
            <person name="Bornemann S."/>
            <person name="Kalscheuer R."/>
        </authorList>
    </citation>
    <scope>FUNCTION</scope>
    <scope>DISRUPTION PHENOTYPE</scope>
</reference>
<dbReference type="EC" id="2.7.7.27" evidence="1"/>
<dbReference type="EMBL" id="CP000480">
    <property type="protein sequence ID" value="ABK75991.1"/>
    <property type="molecule type" value="Genomic_DNA"/>
</dbReference>
<dbReference type="EMBL" id="CP001663">
    <property type="protein sequence ID" value="AFP41397.1"/>
    <property type="molecule type" value="Genomic_DNA"/>
</dbReference>
<dbReference type="RefSeq" id="WP_011730299.1">
    <property type="nucleotide sequence ID" value="NZ_SIJM01000019.1"/>
</dbReference>
<dbReference type="RefSeq" id="YP_889329.1">
    <property type="nucleotide sequence ID" value="NC_008596.1"/>
</dbReference>
<dbReference type="SMR" id="A0R2E1"/>
<dbReference type="STRING" id="246196.MSMEG_5078"/>
<dbReference type="PaxDb" id="246196-MSMEI_4953"/>
<dbReference type="GeneID" id="93459745"/>
<dbReference type="KEGG" id="msb:LJ00_25120"/>
<dbReference type="KEGG" id="msg:MSMEI_4953"/>
<dbReference type="KEGG" id="msm:MSMEG_5078"/>
<dbReference type="PATRIC" id="fig|246196.19.peg.4957"/>
<dbReference type="eggNOG" id="COG0448">
    <property type="taxonomic scope" value="Bacteria"/>
</dbReference>
<dbReference type="OrthoDB" id="9801810at2"/>
<dbReference type="UniPathway" id="UPA00164"/>
<dbReference type="Proteomes" id="UP000000757">
    <property type="component" value="Chromosome"/>
</dbReference>
<dbReference type="Proteomes" id="UP000006158">
    <property type="component" value="Chromosome"/>
</dbReference>
<dbReference type="GO" id="GO:0005524">
    <property type="term" value="F:ATP binding"/>
    <property type="evidence" value="ECO:0007669"/>
    <property type="project" value="UniProtKB-KW"/>
</dbReference>
<dbReference type="GO" id="GO:0008878">
    <property type="term" value="F:glucose-1-phosphate adenylyltransferase activity"/>
    <property type="evidence" value="ECO:0007669"/>
    <property type="project" value="UniProtKB-UniRule"/>
</dbReference>
<dbReference type="GO" id="GO:0005978">
    <property type="term" value="P:glycogen biosynthetic process"/>
    <property type="evidence" value="ECO:0007669"/>
    <property type="project" value="UniProtKB-UniRule"/>
</dbReference>
<dbReference type="CDD" id="cd02508">
    <property type="entry name" value="ADP_Glucose_PP"/>
    <property type="match status" value="1"/>
</dbReference>
<dbReference type="CDD" id="cd04651">
    <property type="entry name" value="LbH_G1P_AT_C"/>
    <property type="match status" value="1"/>
</dbReference>
<dbReference type="FunFam" id="2.160.10.10:FF:000020">
    <property type="entry name" value="Glucose-1-phosphate adenylyltransferase"/>
    <property type="match status" value="1"/>
</dbReference>
<dbReference type="FunFam" id="3.90.550.10:FF:000014">
    <property type="entry name" value="Glucose-1-phosphate adenylyltransferase"/>
    <property type="match status" value="1"/>
</dbReference>
<dbReference type="Gene3D" id="2.160.10.10">
    <property type="entry name" value="Hexapeptide repeat proteins"/>
    <property type="match status" value="1"/>
</dbReference>
<dbReference type="Gene3D" id="3.90.550.10">
    <property type="entry name" value="Spore Coat Polysaccharide Biosynthesis Protein SpsA, Chain A"/>
    <property type="match status" value="1"/>
</dbReference>
<dbReference type="HAMAP" id="MF_00624">
    <property type="entry name" value="GlgC"/>
    <property type="match status" value="1"/>
</dbReference>
<dbReference type="InterPro" id="IPR011831">
    <property type="entry name" value="ADP-Glc_PPase"/>
</dbReference>
<dbReference type="InterPro" id="IPR005836">
    <property type="entry name" value="ADP_Glu_pyroP_CS"/>
</dbReference>
<dbReference type="InterPro" id="IPR023049">
    <property type="entry name" value="GlgC_bac"/>
</dbReference>
<dbReference type="InterPro" id="IPR056818">
    <property type="entry name" value="GlmU/GlgC-like_hexapep"/>
</dbReference>
<dbReference type="InterPro" id="IPR005835">
    <property type="entry name" value="NTP_transferase_dom"/>
</dbReference>
<dbReference type="InterPro" id="IPR029044">
    <property type="entry name" value="Nucleotide-diphossugar_trans"/>
</dbReference>
<dbReference type="InterPro" id="IPR011004">
    <property type="entry name" value="Trimer_LpxA-like_sf"/>
</dbReference>
<dbReference type="NCBIfam" id="TIGR02091">
    <property type="entry name" value="glgC"/>
    <property type="match status" value="1"/>
</dbReference>
<dbReference type="NCBIfam" id="NF001947">
    <property type="entry name" value="PRK00725.1"/>
    <property type="match status" value="1"/>
</dbReference>
<dbReference type="NCBIfam" id="NF002023">
    <property type="entry name" value="PRK00844.1"/>
    <property type="match status" value="1"/>
</dbReference>
<dbReference type="PANTHER" id="PTHR43523:SF2">
    <property type="entry name" value="GLUCOSE-1-PHOSPHATE ADENYLYLTRANSFERASE"/>
    <property type="match status" value="1"/>
</dbReference>
<dbReference type="PANTHER" id="PTHR43523">
    <property type="entry name" value="GLUCOSE-1-PHOSPHATE ADENYLYLTRANSFERASE-RELATED"/>
    <property type="match status" value="1"/>
</dbReference>
<dbReference type="Pfam" id="PF24894">
    <property type="entry name" value="Hexapep_GlmU"/>
    <property type="match status" value="1"/>
</dbReference>
<dbReference type="Pfam" id="PF00483">
    <property type="entry name" value="NTP_transferase"/>
    <property type="match status" value="1"/>
</dbReference>
<dbReference type="SUPFAM" id="SSF53448">
    <property type="entry name" value="Nucleotide-diphospho-sugar transferases"/>
    <property type="match status" value="1"/>
</dbReference>
<dbReference type="SUPFAM" id="SSF51161">
    <property type="entry name" value="Trimeric LpxA-like enzymes"/>
    <property type="match status" value="1"/>
</dbReference>
<dbReference type="PROSITE" id="PS00808">
    <property type="entry name" value="ADP_GLC_PYROPHOSPH_1"/>
    <property type="match status" value="1"/>
</dbReference>
<dbReference type="PROSITE" id="PS00809">
    <property type="entry name" value="ADP_GLC_PYROPHOSPH_2"/>
    <property type="match status" value="1"/>
</dbReference>
<dbReference type="PROSITE" id="PS00810">
    <property type="entry name" value="ADP_GLC_PYROPHOSPH_3"/>
    <property type="match status" value="1"/>
</dbReference>
<comment type="function">
    <text evidence="3">Involved in the biosynthesis of ADP-glucose building block, required in the biosynthesis of maltose-1-phosphate (M1P) and in the elongation reactions to produce linear alpha-1,4-glucans. Catalyzes the reaction between ATP and alpha-D-glucose 1-phosphate (G1P) to produce pyrophosphate and ADP-Glc.</text>
</comment>
<comment type="catalytic activity">
    <reaction evidence="1">
        <text>alpha-D-glucose 1-phosphate + ATP + H(+) = ADP-alpha-D-glucose + diphosphate</text>
        <dbReference type="Rhea" id="RHEA:12120"/>
        <dbReference type="ChEBI" id="CHEBI:15378"/>
        <dbReference type="ChEBI" id="CHEBI:30616"/>
        <dbReference type="ChEBI" id="CHEBI:33019"/>
        <dbReference type="ChEBI" id="CHEBI:57498"/>
        <dbReference type="ChEBI" id="CHEBI:58601"/>
        <dbReference type="EC" id="2.7.7.27"/>
    </reaction>
</comment>
<comment type="pathway">
    <text evidence="1 2">Glycan biosynthesis; glycogen biosynthesis.</text>
</comment>
<comment type="disruption phenotype">
    <text evidence="3">Inactivation of glgC shows a strong reduction in alpha-glucan content. Combined inactivation of both glgC and treS results in a complete absence of alpha-glucan.</text>
</comment>
<comment type="miscellaneous">
    <text evidence="3">Maltose-1-phosphate (M1P) is generated by two alternative routes: the TreS-Pep2 branch and the GlgC-GlgM branch, however it seems that the GlgC-GlgM branch provides most of M1P for the GlgE pathway in M.smegmatis.</text>
</comment>
<comment type="similarity">
    <text evidence="1">Belongs to the bacterial/plant glucose-1-phosphate adenylyltransferase family.</text>
</comment>
<organism>
    <name type="scientific">Mycolicibacterium smegmatis (strain ATCC 700084 / mc(2)155)</name>
    <name type="common">Mycobacterium smegmatis</name>
    <dbReference type="NCBI Taxonomy" id="246196"/>
    <lineage>
        <taxon>Bacteria</taxon>
        <taxon>Bacillati</taxon>
        <taxon>Actinomycetota</taxon>
        <taxon>Actinomycetes</taxon>
        <taxon>Mycobacteriales</taxon>
        <taxon>Mycobacteriaceae</taxon>
        <taxon>Mycolicibacterium</taxon>
    </lineage>
</organism>
<sequence>MRELPHVLGIVLAGGEGKRLYPLTADRAKPAVPFGGAYRLIDFVLSNLVNARYLRICVLTQYKSHSLDRHISQNWRLSGLAGEYITPVPAQQRLGPRWYTGSADAIYQSLNLIYDEDPDYIIIFGADHVYRMDPEQMMQFHIESGAGATVAGIRVPRSEASAFGCIDADESGRIREFIEKPADPPGTPDDPEQTFVSMGNYIFTTKVLIDAIRADADDDHSDHDMGGDIIPRLVADGMAAVYDFKNNEVPGATERDHGYWRDVGTLDAFYDAHMDLVSVHPVFNLYNKRWPIRGESENLAPAKFVNGGSAQESVVGAGSIISAASVRNSVLSSNVVVDDGAIVEGSVLMPGVRIGRGAVVRHAILDKNVVVGPGEMVGVDLDKDRERFAISAGGVVAVGKGVWI</sequence>
<keyword id="KW-0067">ATP-binding</keyword>
<keyword id="KW-0119">Carbohydrate metabolism</keyword>
<keyword id="KW-0320">Glycogen biosynthesis</keyword>
<keyword id="KW-0321">Glycogen metabolism</keyword>
<keyword id="KW-0547">Nucleotide-binding</keyword>
<keyword id="KW-0548">Nucleotidyltransferase</keyword>
<keyword id="KW-1185">Reference proteome</keyword>
<keyword id="KW-0808">Transferase</keyword>
<gene>
    <name evidence="4" type="primary">glgC</name>
    <name evidence="5" type="ordered locus">MSMEG_5078</name>
    <name evidence="6" type="ordered locus">MSMEI_4953</name>
</gene>
<protein>
    <recommendedName>
        <fullName evidence="4">Glucose-1-phosphate adenylyltransferase</fullName>
        <ecNumber evidence="1">2.7.7.27</ecNumber>
    </recommendedName>
    <alternativeName>
        <fullName evidence="4">ADP-glucose pyrophosphorylase</fullName>
    </alternativeName>
    <alternativeName>
        <fullName evidence="1">ADP-glucose synthase</fullName>
    </alternativeName>
</protein>
<name>GLGC_MYCS2</name>
<evidence type="ECO:0000255" key="1">
    <source>
        <dbReference type="HAMAP-Rule" id="MF_00624"/>
    </source>
</evidence>
<evidence type="ECO:0000255" key="2">
    <source>
        <dbReference type="RuleBase" id="RU003742"/>
    </source>
</evidence>
<evidence type="ECO:0000269" key="3">
    <source>
    </source>
</evidence>
<evidence type="ECO:0000303" key="4">
    <source>
    </source>
</evidence>
<evidence type="ECO:0000312" key="5">
    <source>
        <dbReference type="EMBL" id="ABK75991.1"/>
    </source>
</evidence>
<evidence type="ECO:0000312" key="6">
    <source>
        <dbReference type="EMBL" id="AFP41397.1"/>
    </source>
</evidence>
<accession>A0R2E1</accession>